<proteinExistence type="inferred from homology"/>
<name>18K1_MYCIT</name>
<accession>P46730</accession>
<organism>
    <name type="scientific">Mycobacterium intracellulare</name>
    <dbReference type="NCBI Taxonomy" id="1767"/>
    <lineage>
        <taxon>Bacteria</taxon>
        <taxon>Bacillati</taxon>
        <taxon>Actinomycetota</taxon>
        <taxon>Actinomycetes</taxon>
        <taxon>Mycobacteriales</taxon>
        <taxon>Mycobacteriaceae</taxon>
        <taxon>Mycobacterium</taxon>
        <taxon>Mycobacterium avium complex (MAC)</taxon>
    </lineage>
</organism>
<sequence>MLMRSDPFRELDRFAHQVLGTAARPAVMPMDAWRQGEEFVVEFDLPGIDADSLDIDIERNVVTVRAERPALDPNREMLATERPRGVFSRQLVLGENLDTDKIQASYSEGVLSLHIPVAEKAKPRKIAVGRGDGHHAVAEGAAQREVINA</sequence>
<reference key="1">
    <citation type="journal article" date="1993" name="Infect. Immun.">
        <title>Homologs of Mycobacterium leprae 18-kilodalton and Mycobacterium tuberculosis 19-kilodalton antigens in other mycobacteria.</title>
        <authorList>
            <person name="Booth R.J."/>
            <person name="Williams D.L."/>
            <person name="Moudgil K.D."/>
            <person name="Noonan L.C."/>
            <person name="Grandison P.M."/>
            <person name="McKee J.J."/>
            <person name="Prestidge R.L."/>
            <person name="Watson J.D."/>
        </authorList>
    </citation>
    <scope>NUCLEOTIDE SEQUENCE [GENOMIC DNA]</scope>
    <source>
        <strain>ATCC 35772 / TMC 1469 / Darden / Serovar 19</strain>
    </source>
</reference>
<comment type="function">
    <text>Not known. This protein is one of the major immune reactive proteins in mycobacteria.</text>
</comment>
<comment type="similarity">
    <text evidence="1">Belongs to the small heat shock protein (HSP20) family.</text>
</comment>
<protein>
    <recommendedName>
        <fullName>18 kDa antigen 1</fullName>
    </recommendedName>
    <alternativeName>
        <fullName>18 kDa antigen clone MINTC73</fullName>
    </alternativeName>
</protein>
<feature type="chain" id="PRO_0000126014" description="18 kDa antigen 1">
    <location>
        <begin position="1"/>
        <end position="149"/>
    </location>
</feature>
<feature type="domain" description="sHSP" evidence="1">
    <location>
        <begin position="21"/>
        <end position="131"/>
    </location>
</feature>
<dbReference type="EMBL" id="L12240">
    <property type="protein sequence ID" value="AAA25348.1"/>
    <property type="molecule type" value="Genomic_DNA"/>
</dbReference>
<dbReference type="SMR" id="P46730"/>
<dbReference type="CDD" id="cd06464">
    <property type="entry name" value="ACD_sHsps-like"/>
    <property type="match status" value="1"/>
</dbReference>
<dbReference type="Gene3D" id="2.60.40.790">
    <property type="match status" value="1"/>
</dbReference>
<dbReference type="InterPro" id="IPR002068">
    <property type="entry name" value="A-crystallin/Hsp20_dom"/>
</dbReference>
<dbReference type="InterPro" id="IPR008978">
    <property type="entry name" value="HSP20-like_chaperone"/>
</dbReference>
<dbReference type="InterPro" id="IPR031107">
    <property type="entry name" value="Small_HSP"/>
</dbReference>
<dbReference type="PANTHER" id="PTHR11527">
    <property type="entry name" value="HEAT-SHOCK PROTEIN 20 FAMILY MEMBER"/>
    <property type="match status" value="1"/>
</dbReference>
<dbReference type="Pfam" id="PF00011">
    <property type="entry name" value="HSP20"/>
    <property type="match status" value="1"/>
</dbReference>
<dbReference type="SUPFAM" id="SSF49764">
    <property type="entry name" value="HSP20-like chaperones"/>
    <property type="match status" value="1"/>
</dbReference>
<dbReference type="PROSITE" id="PS01031">
    <property type="entry name" value="SHSP"/>
    <property type="match status" value="1"/>
</dbReference>
<evidence type="ECO:0000255" key="1">
    <source>
        <dbReference type="PROSITE-ProRule" id="PRU00285"/>
    </source>
</evidence>